<proteinExistence type="inferred from homology"/>
<evidence type="ECO:0000255" key="1">
    <source>
        <dbReference type="HAMAP-Rule" id="MF_00210"/>
    </source>
</evidence>
<evidence type="ECO:0000256" key="2">
    <source>
        <dbReference type="SAM" id="MobiDB-lite"/>
    </source>
</evidence>
<protein>
    <recommendedName>
        <fullName evidence="1">3-phosphoshikimate 1-carboxyvinyltransferase</fullName>
        <ecNumber evidence="1">2.5.1.19</ecNumber>
    </recommendedName>
    <alternativeName>
        <fullName evidence="1">5-enolpyruvylshikimate-3-phosphate synthase</fullName>
        <shortName evidence="1">EPSP synthase</shortName>
        <shortName evidence="1">EPSPS</shortName>
    </alternativeName>
</protein>
<accession>B1M0N9</accession>
<reference key="1">
    <citation type="submission" date="2008-03" db="EMBL/GenBank/DDBJ databases">
        <title>Complete sequence of chromosome of Methylobacterium radiotolerans JCM 2831.</title>
        <authorList>
            <consortium name="US DOE Joint Genome Institute"/>
            <person name="Copeland A."/>
            <person name="Lucas S."/>
            <person name="Lapidus A."/>
            <person name="Glavina del Rio T."/>
            <person name="Dalin E."/>
            <person name="Tice H."/>
            <person name="Bruce D."/>
            <person name="Goodwin L."/>
            <person name="Pitluck S."/>
            <person name="Kiss H."/>
            <person name="Brettin T."/>
            <person name="Detter J.C."/>
            <person name="Han C."/>
            <person name="Kuske C.R."/>
            <person name="Schmutz J."/>
            <person name="Larimer F."/>
            <person name="Land M."/>
            <person name="Hauser L."/>
            <person name="Kyrpides N."/>
            <person name="Mikhailova N."/>
            <person name="Marx C.J."/>
            <person name="Richardson P."/>
        </authorList>
    </citation>
    <scope>NUCLEOTIDE SEQUENCE [LARGE SCALE GENOMIC DNA]</scope>
    <source>
        <strain>ATCC 27329 / DSM 1819 / JCM 2831 / NBRC 15690 / NCIMB 10815 / 0-1</strain>
    </source>
</reference>
<keyword id="KW-0028">Amino-acid biosynthesis</keyword>
<keyword id="KW-0057">Aromatic amino acid biosynthesis</keyword>
<keyword id="KW-0963">Cytoplasm</keyword>
<keyword id="KW-0808">Transferase</keyword>
<feature type="chain" id="PRO_1000099721" description="3-phosphoshikimate 1-carboxyvinyltransferase">
    <location>
        <begin position="1"/>
        <end position="449"/>
    </location>
</feature>
<feature type="region of interest" description="Disordered" evidence="2">
    <location>
        <begin position="1"/>
        <end position="30"/>
    </location>
</feature>
<feature type="active site" description="Proton acceptor" evidence="1">
    <location>
        <position position="330"/>
    </location>
</feature>
<feature type="binding site" evidence="1">
    <location>
        <position position="28"/>
    </location>
    <ligand>
        <name>3-phosphoshikimate</name>
        <dbReference type="ChEBI" id="CHEBI:145989"/>
    </ligand>
</feature>
<feature type="binding site" evidence="1">
    <location>
        <position position="28"/>
    </location>
    <ligand>
        <name>phosphoenolpyruvate</name>
        <dbReference type="ChEBI" id="CHEBI:58702"/>
    </ligand>
</feature>
<feature type="binding site" evidence="1">
    <location>
        <position position="29"/>
    </location>
    <ligand>
        <name>3-phosphoshikimate</name>
        <dbReference type="ChEBI" id="CHEBI:145989"/>
    </ligand>
</feature>
<feature type="binding site" evidence="1">
    <location>
        <position position="33"/>
    </location>
    <ligand>
        <name>3-phosphoshikimate</name>
        <dbReference type="ChEBI" id="CHEBI:145989"/>
    </ligand>
</feature>
<feature type="binding site" evidence="1">
    <location>
        <position position="101"/>
    </location>
    <ligand>
        <name>phosphoenolpyruvate</name>
        <dbReference type="ChEBI" id="CHEBI:58702"/>
    </ligand>
</feature>
<feature type="binding site" evidence="1">
    <location>
        <position position="129"/>
    </location>
    <ligand>
        <name>phosphoenolpyruvate</name>
        <dbReference type="ChEBI" id="CHEBI:58702"/>
    </ligand>
</feature>
<feature type="binding site" evidence="1">
    <location>
        <position position="175"/>
    </location>
    <ligand>
        <name>3-phosphoshikimate</name>
        <dbReference type="ChEBI" id="CHEBI:145989"/>
    </ligand>
</feature>
<feature type="binding site" evidence="1">
    <location>
        <position position="177"/>
    </location>
    <ligand>
        <name>3-phosphoshikimate</name>
        <dbReference type="ChEBI" id="CHEBI:145989"/>
    </ligand>
</feature>
<feature type="binding site" evidence="1">
    <location>
        <position position="177"/>
    </location>
    <ligand>
        <name>phosphoenolpyruvate</name>
        <dbReference type="ChEBI" id="CHEBI:58702"/>
    </ligand>
</feature>
<feature type="binding site" evidence="1">
    <location>
        <position position="330"/>
    </location>
    <ligand>
        <name>3-phosphoshikimate</name>
        <dbReference type="ChEBI" id="CHEBI:145989"/>
    </ligand>
</feature>
<feature type="binding site" evidence="1">
    <location>
        <position position="357"/>
    </location>
    <ligand>
        <name>3-phosphoshikimate</name>
        <dbReference type="ChEBI" id="CHEBI:145989"/>
    </ligand>
</feature>
<feature type="binding site" evidence="1">
    <location>
        <position position="361"/>
    </location>
    <ligand>
        <name>phosphoenolpyruvate</name>
        <dbReference type="ChEBI" id="CHEBI:58702"/>
    </ligand>
</feature>
<feature type="binding site" evidence="1">
    <location>
        <position position="405"/>
    </location>
    <ligand>
        <name>phosphoenolpyruvate</name>
        <dbReference type="ChEBI" id="CHEBI:58702"/>
    </ligand>
</feature>
<organism>
    <name type="scientific">Methylobacterium radiotolerans (strain ATCC 27329 / DSM 1819 / JCM 2831 / NBRC 15690 / NCIMB 10815 / 0-1)</name>
    <dbReference type="NCBI Taxonomy" id="426355"/>
    <lineage>
        <taxon>Bacteria</taxon>
        <taxon>Pseudomonadati</taxon>
        <taxon>Pseudomonadota</taxon>
        <taxon>Alphaproteobacteria</taxon>
        <taxon>Hyphomicrobiales</taxon>
        <taxon>Methylobacteriaceae</taxon>
        <taxon>Methylobacterium</taxon>
    </lineage>
</organism>
<name>AROA_METRJ</name>
<comment type="function">
    <text evidence="1">Catalyzes the transfer of the enolpyruvyl moiety of phosphoenolpyruvate (PEP) to the 5-hydroxyl of shikimate-3-phosphate (S3P) to produce enolpyruvyl shikimate-3-phosphate and inorganic phosphate.</text>
</comment>
<comment type="catalytic activity">
    <reaction evidence="1">
        <text>3-phosphoshikimate + phosphoenolpyruvate = 5-O-(1-carboxyvinyl)-3-phosphoshikimate + phosphate</text>
        <dbReference type="Rhea" id="RHEA:21256"/>
        <dbReference type="ChEBI" id="CHEBI:43474"/>
        <dbReference type="ChEBI" id="CHEBI:57701"/>
        <dbReference type="ChEBI" id="CHEBI:58702"/>
        <dbReference type="ChEBI" id="CHEBI:145989"/>
        <dbReference type="EC" id="2.5.1.19"/>
    </reaction>
    <physiologicalReaction direction="left-to-right" evidence="1">
        <dbReference type="Rhea" id="RHEA:21257"/>
    </physiologicalReaction>
</comment>
<comment type="pathway">
    <text evidence="1">Metabolic intermediate biosynthesis; chorismate biosynthesis; chorismate from D-erythrose 4-phosphate and phosphoenolpyruvate: step 6/7.</text>
</comment>
<comment type="subunit">
    <text evidence="1">Monomer.</text>
</comment>
<comment type="subcellular location">
    <subcellularLocation>
        <location evidence="1">Cytoplasm</location>
    </subcellularLocation>
</comment>
<comment type="similarity">
    <text evidence="1">Belongs to the EPSP synthase family.</text>
</comment>
<gene>
    <name evidence="1" type="primary">aroA</name>
    <name type="ordered locus">Mrad2831_5616</name>
</gene>
<dbReference type="EC" id="2.5.1.19" evidence="1"/>
<dbReference type="EMBL" id="CP001001">
    <property type="protein sequence ID" value="ACB27561.1"/>
    <property type="molecule type" value="Genomic_DNA"/>
</dbReference>
<dbReference type="RefSeq" id="WP_012322503.1">
    <property type="nucleotide sequence ID" value="NC_010505.1"/>
</dbReference>
<dbReference type="SMR" id="B1M0N9"/>
<dbReference type="STRING" id="426355.Mrad2831_5616"/>
<dbReference type="GeneID" id="6141692"/>
<dbReference type="KEGG" id="mrd:Mrad2831_5616"/>
<dbReference type="eggNOG" id="COG0128">
    <property type="taxonomic scope" value="Bacteria"/>
</dbReference>
<dbReference type="HOGENOM" id="CLU_024321_0_1_5"/>
<dbReference type="OrthoDB" id="9809920at2"/>
<dbReference type="UniPathway" id="UPA00053">
    <property type="reaction ID" value="UER00089"/>
</dbReference>
<dbReference type="Proteomes" id="UP000006589">
    <property type="component" value="Chromosome"/>
</dbReference>
<dbReference type="GO" id="GO:0005737">
    <property type="term" value="C:cytoplasm"/>
    <property type="evidence" value="ECO:0007669"/>
    <property type="project" value="UniProtKB-SubCell"/>
</dbReference>
<dbReference type="GO" id="GO:0003866">
    <property type="term" value="F:3-phosphoshikimate 1-carboxyvinyltransferase activity"/>
    <property type="evidence" value="ECO:0007669"/>
    <property type="project" value="UniProtKB-UniRule"/>
</dbReference>
<dbReference type="GO" id="GO:0008652">
    <property type="term" value="P:amino acid biosynthetic process"/>
    <property type="evidence" value="ECO:0007669"/>
    <property type="project" value="UniProtKB-KW"/>
</dbReference>
<dbReference type="GO" id="GO:0009073">
    <property type="term" value="P:aromatic amino acid family biosynthetic process"/>
    <property type="evidence" value="ECO:0007669"/>
    <property type="project" value="UniProtKB-KW"/>
</dbReference>
<dbReference type="GO" id="GO:0009423">
    <property type="term" value="P:chorismate biosynthetic process"/>
    <property type="evidence" value="ECO:0007669"/>
    <property type="project" value="UniProtKB-UniRule"/>
</dbReference>
<dbReference type="CDD" id="cd01556">
    <property type="entry name" value="EPSP_synthase"/>
    <property type="match status" value="1"/>
</dbReference>
<dbReference type="FunFam" id="3.65.10.10:FF:000005">
    <property type="entry name" value="3-phosphoshikimate 1-carboxyvinyltransferase"/>
    <property type="match status" value="1"/>
</dbReference>
<dbReference type="Gene3D" id="3.65.10.10">
    <property type="entry name" value="Enolpyruvate transferase domain"/>
    <property type="match status" value="2"/>
</dbReference>
<dbReference type="HAMAP" id="MF_00210">
    <property type="entry name" value="EPSP_synth"/>
    <property type="match status" value="1"/>
</dbReference>
<dbReference type="InterPro" id="IPR001986">
    <property type="entry name" value="Enolpyruvate_Tfrase_dom"/>
</dbReference>
<dbReference type="InterPro" id="IPR036968">
    <property type="entry name" value="Enolpyruvate_Tfrase_sf"/>
</dbReference>
<dbReference type="InterPro" id="IPR006264">
    <property type="entry name" value="EPSP_synthase"/>
</dbReference>
<dbReference type="InterPro" id="IPR023193">
    <property type="entry name" value="EPSP_synthase_CS"/>
</dbReference>
<dbReference type="InterPro" id="IPR013792">
    <property type="entry name" value="RNA3'P_cycl/enolpyr_Trfase_a/b"/>
</dbReference>
<dbReference type="NCBIfam" id="TIGR01356">
    <property type="entry name" value="aroA"/>
    <property type="match status" value="1"/>
</dbReference>
<dbReference type="PANTHER" id="PTHR21090">
    <property type="entry name" value="AROM/DEHYDROQUINATE SYNTHASE"/>
    <property type="match status" value="1"/>
</dbReference>
<dbReference type="PANTHER" id="PTHR21090:SF5">
    <property type="entry name" value="PENTAFUNCTIONAL AROM POLYPEPTIDE"/>
    <property type="match status" value="1"/>
</dbReference>
<dbReference type="Pfam" id="PF00275">
    <property type="entry name" value="EPSP_synthase"/>
    <property type="match status" value="1"/>
</dbReference>
<dbReference type="PIRSF" id="PIRSF000505">
    <property type="entry name" value="EPSPS"/>
    <property type="match status" value="1"/>
</dbReference>
<dbReference type="SUPFAM" id="SSF55205">
    <property type="entry name" value="EPT/RTPC-like"/>
    <property type="match status" value="1"/>
</dbReference>
<dbReference type="PROSITE" id="PS00104">
    <property type="entry name" value="EPSP_SYNTHASE_1"/>
    <property type="match status" value="1"/>
</dbReference>
<dbReference type="PROSITE" id="PS00885">
    <property type="entry name" value="EPSP_SYNTHASE_2"/>
    <property type="match status" value="1"/>
</dbReference>
<sequence>MSHDSSPQPLTAAPGAPLRGRLRPPGDKSISHRSMILGLLSQGETRVEGLLEGDDVLRTAAAAKALGAGVERLGPGRWRVQGVGIGGLGDPADVLDFGNAGTGSRLMMGVVGGQPVTATFDGDASLRSRPMRRILDPLTRMGTQVLSEAEGGRVPLTLRGPREAIPITYETPAASAQIKSAVLLAGLNAPGVTTVIEAAATRDHTERMLRLFGAAVSVEPHGPGGHGRKVALTGQPTLRGTDVVVPADPSSAAFPLVAALIVPGSDVVIEGVMMNPLRIGLITTLLEMGAQIERVAEREEGGETVADLRVRASRLNGVDVPAERAPAMIDEYPVLAVAASFAEGRTRMSGLHELRVKESDRLAAVAAGLAANGVRHTVEGDDLVVEGDGAAAPGGGTVETHLDHRIAMAFLVMGLAARNPVTVDDGAMIATSFPSFLPTMQALGGRIGA</sequence>